<accession>Q1QRF9</accession>
<keyword id="KW-0963">Cytoplasm</keyword>
<keyword id="KW-0378">Hydrolase</keyword>
<keyword id="KW-0546">Nucleotide metabolism</keyword>
<keyword id="KW-1185">Reference proteome</keyword>
<protein>
    <recommendedName>
        <fullName evidence="1">dTTP/UTP pyrophosphatase</fullName>
        <shortName evidence="1">dTTPase/UTPase</shortName>
        <ecNumber evidence="1">3.6.1.9</ecNumber>
    </recommendedName>
    <alternativeName>
        <fullName evidence="1">Nucleoside triphosphate pyrophosphatase</fullName>
    </alternativeName>
    <alternativeName>
        <fullName evidence="1">Nucleotide pyrophosphatase</fullName>
        <shortName evidence="1">Nucleotide PPase</shortName>
    </alternativeName>
</protein>
<organism>
    <name type="scientific">Nitrobacter hamburgensis (strain DSM 10229 / NCIMB 13809 / X14)</name>
    <dbReference type="NCBI Taxonomy" id="323097"/>
    <lineage>
        <taxon>Bacteria</taxon>
        <taxon>Pseudomonadati</taxon>
        <taxon>Pseudomonadota</taxon>
        <taxon>Alphaproteobacteria</taxon>
        <taxon>Hyphomicrobiales</taxon>
        <taxon>Nitrobacteraceae</taxon>
        <taxon>Nitrobacter</taxon>
    </lineage>
</organism>
<feature type="chain" id="PRO_0000267352" description="dTTP/UTP pyrophosphatase">
    <location>
        <begin position="1"/>
        <end position="207"/>
    </location>
</feature>
<feature type="active site" description="Proton acceptor" evidence="1">
    <location>
        <position position="79"/>
    </location>
</feature>
<feature type="site" description="Important for substrate specificity" evidence="1">
    <location>
        <position position="15"/>
    </location>
</feature>
<feature type="site" description="Important for substrate specificity" evidence="1">
    <location>
        <position position="80"/>
    </location>
</feature>
<feature type="site" description="Important for substrate specificity" evidence="1">
    <location>
        <position position="163"/>
    </location>
</feature>
<sequence>MTGRLKLVLASGSPRRLSLLNQAGIDPDALRPADVDETPERGELPRACANRLARAKADATLKAVQLDDDLRGSFILAADTVVAVGRRILPKADLADEASQCLRLLSGRNHRVYTAVCLVTPKGNCRQRLIETRVRFKRLTEEDIRGYVGSGEWRGKAGGYAVQGIAGSFVVKLVGSYTNVVGLPLYESVSLLGGEGFPIRSGWLNAG</sequence>
<reference key="1">
    <citation type="submission" date="2006-03" db="EMBL/GenBank/DDBJ databases">
        <title>Complete sequence of chromosome of Nitrobacter hamburgensis X14.</title>
        <authorList>
            <consortium name="US DOE Joint Genome Institute"/>
            <person name="Copeland A."/>
            <person name="Lucas S."/>
            <person name="Lapidus A."/>
            <person name="Barry K."/>
            <person name="Detter J.C."/>
            <person name="Glavina del Rio T."/>
            <person name="Hammon N."/>
            <person name="Israni S."/>
            <person name="Dalin E."/>
            <person name="Tice H."/>
            <person name="Pitluck S."/>
            <person name="Chain P."/>
            <person name="Malfatti S."/>
            <person name="Shin M."/>
            <person name="Vergez L."/>
            <person name="Schmutz J."/>
            <person name="Larimer F."/>
            <person name="Land M."/>
            <person name="Hauser L."/>
            <person name="Kyrpides N."/>
            <person name="Ivanova N."/>
            <person name="Ward B."/>
            <person name="Arp D."/>
            <person name="Klotz M."/>
            <person name="Stein L."/>
            <person name="O'Mullan G."/>
            <person name="Starkenburg S."/>
            <person name="Sayavedra L."/>
            <person name="Poret-Peterson A.T."/>
            <person name="Gentry M.E."/>
            <person name="Bruce D."/>
            <person name="Richardson P."/>
        </authorList>
    </citation>
    <scope>NUCLEOTIDE SEQUENCE [LARGE SCALE GENOMIC DNA]</scope>
    <source>
        <strain>DSM 10229 / NCIMB 13809 / X14</strain>
    </source>
</reference>
<proteinExistence type="inferred from homology"/>
<dbReference type="EC" id="3.6.1.9" evidence="1"/>
<dbReference type="EMBL" id="CP000319">
    <property type="protein sequence ID" value="ABE61188.1"/>
    <property type="molecule type" value="Genomic_DNA"/>
</dbReference>
<dbReference type="RefSeq" id="WP_011508892.1">
    <property type="nucleotide sequence ID" value="NC_007964.1"/>
</dbReference>
<dbReference type="SMR" id="Q1QRF9"/>
<dbReference type="STRING" id="323097.Nham_0292"/>
<dbReference type="KEGG" id="nha:Nham_0292"/>
<dbReference type="eggNOG" id="COG0424">
    <property type="taxonomic scope" value="Bacteria"/>
</dbReference>
<dbReference type="HOGENOM" id="CLU_040416_2_0_5"/>
<dbReference type="OrthoDB" id="9807767at2"/>
<dbReference type="Proteomes" id="UP000001953">
    <property type="component" value="Chromosome"/>
</dbReference>
<dbReference type="GO" id="GO:0005737">
    <property type="term" value="C:cytoplasm"/>
    <property type="evidence" value="ECO:0007669"/>
    <property type="project" value="UniProtKB-SubCell"/>
</dbReference>
<dbReference type="GO" id="GO:0036218">
    <property type="term" value="F:dTTP diphosphatase activity"/>
    <property type="evidence" value="ECO:0007669"/>
    <property type="project" value="RHEA"/>
</dbReference>
<dbReference type="GO" id="GO:0036221">
    <property type="term" value="F:UTP diphosphatase activity"/>
    <property type="evidence" value="ECO:0007669"/>
    <property type="project" value="RHEA"/>
</dbReference>
<dbReference type="GO" id="GO:0009117">
    <property type="term" value="P:nucleotide metabolic process"/>
    <property type="evidence" value="ECO:0007669"/>
    <property type="project" value="UniProtKB-KW"/>
</dbReference>
<dbReference type="CDD" id="cd00555">
    <property type="entry name" value="Maf"/>
    <property type="match status" value="1"/>
</dbReference>
<dbReference type="FunFam" id="3.90.950.10:FF:000005">
    <property type="entry name" value="7-methyl-GTP pyrophosphatase"/>
    <property type="match status" value="1"/>
</dbReference>
<dbReference type="Gene3D" id="3.90.950.10">
    <property type="match status" value="1"/>
</dbReference>
<dbReference type="HAMAP" id="MF_00528">
    <property type="entry name" value="Maf"/>
    <property type="match status" value="1"/>
</dbReference>
<dbReference type="InterPro" id="IPR029001">
    <property type="entry name" value="ITPase-like_fam"/>
</dbReference>
<dbReference type="InterPro" id="IPR003697">
    <property type="entry name" value="Maf-like"/>
</dbReference>
<dbReference type="NCBIfam" id="TIGR00172">
    <property type="entry name" value="maf"/>
    <property type="match status" value="1"/>
</dbReference>
<dbReference type="NCBIfam" id="NF002401">
    <property type="entry name" value="PRK01441.1"/>
    <property type="match status" value="1"/>
</dbReference>
<dbReference type="PANTHER" id="PTHR43213">
    <property type="entry name" value="BIFUNCTIONAL DTTP/UTP PYROPHOSPHATASE/METHYLTRANSFERASE PROTEIN-RELATED"/>
    <property type="match status" value="1"/>
</dbReference>
<dbReference type="PANTHER" id="PTHR43213:SF5">
    <property type="entry name" value="BIFUNCTIONAL DTTP_UTP PYROPHOSPHATASE_METHYLTRANSFERASE PROTEIN-RELATED"/>
    <property type="match status" value="1"/>
</dbReference>
<dbReference type="Pfam" id="PF02545">
    <property type="entry name" value="Maf"/>
    <property type="match status" value="1"/>
</dbReference>
<dbReference type="PIRSF" id="PIRSF006305">
    <property type="entry name" value="Maf"/>
    <property type="match status" value="1"/>
</dbReference>
<dbReference type="SUPFAM" id="SSF52972">
    <property type="entry name" value="ITPase-like"/>
    <property type="match status" value="1"/>
</dbReference>
<comment type="function">
    <text evidence="1">Nucleoside triphosphate pyrophosphatase that hydrolyzes dTTP and UTP. May have a dual role in cell division arrest and in preventing the incorporation of modified nucleotides into cellular nucleic acids.</text>
</comment>
<comment type="catalytic activity">
    <reaction evidence="1">
        <text>dTTP + H2O = dTMP + diphosphate + H(+)</text>
        <dbReference type="Rhea" id="RHEA:28534"/>
        <dbReference type="ChEBI" id="CHEBI:15377"/>
        <dbReference type="ChEBI" id="CHEBI:15378"/>
        <dbReference type="ChEBI" id="CHEBI:33019"/>
        <dbReference type="ChEBI" id="CHEBI:37568"/>
        <dbReference type="ChEBI" id="CHEBI:63528"/>
        <dbReference type="EC" id="3.6.1.9"/>
    </reaction>
</comment>
<comment type="catalytic activity">
    <reaction evidence="1">
        <text>UTP + H2O = UMP + diphosphate + H(+)</text>
        <dbReference type="Rhea" id="RHEA:29395"/>
        <dbReference type="ChEBI" id="CHEBI:15377"/>
        <dbReference type="ChEBI" id="CHEBI:15378"/>
        <dbReference type="ChEBI" id="CHEBI:33019"/>
        <dbReference type="ChEBI" id="CHEBI:46398"/>
        <dbReference type="ChEBI" id="CHEBI:57865"/>
        <dbReference type="EC" id="3.6.1.9"/>
    </reaction>
</comment>
<comment type="cofactor">
    <cofactor evidence="1">
        <name>a divalent metal cation</name>
        <dbReference type="ChEBI" id="CHEBI:60240"/>
    </cofactor>
</comment>
<comment type="subcellular location">
    <subcellularLocation>
        <location evidence="1">Cytoplasm</location>
    </subcellularLocation>
</comment>
<comment type="similarity">
    <text evidence="1">Belongs to the Maf family. YhdE subfamily.</text>
</comment>
<name>NTPPA_NITHX</name>
<gene>
    <name type="ordered locus">Nham_0292</name>
</gene>
<evidence type="ECO:0000255" key="1">
    <source>
        <dbReference type="HAMAP-Rule" id="MF_00528"/>
    </source>
</evidence>